<comment type="function">
    <text evidence="5">This venom zinc protease has fibrinolytic activity. The recombinant enzyme cleaves both alpha- (FGA) and beta-chains (FGB) of fibrinogen, but not the gamma-chain. The recombinant protein does not produce hemorrhage in mice and does not have effect on ADP- or collagen-stimulated platelet aggregation.</text>
</comment>
<comment type="cofactor">
    <cofactor evidence="1">
        <name>Zn(2+)</name>
        <dbReference type="ChEBI" id="CHEBI:29105"/>
    </cofactor>
    <text evidence="1">Binds 1 zinc ion per subunit.</text>
</comment>
<comment type="activity regulation">
    <text evidence="5">Inhibited by EDTA and 1,10-phenanthroline, but not by PMSF.</text>
</comment>
<comment type="subunit">
    <text evidence="1">Monomer.</text>
</comment>
<comment type="subcellular location">
    <subcellularLocation>
        <location evidence="1">Secreted</location>
    </subcellularLocation>
</comment>
<comment type="tissue specificity">
    <text>Expressed by the venom gland.</text>
</comment>
<comment type="similarity">
    <text evidence="6">Belongs to the venom metalloproteinase (M12B) family. P-I subfamily.</text>
</comment>
<sequence>MIQVLLVTICLAAFPYQGSSIILESGNVNDYEIVYPRKVTPVPRGAVQPKYEDAMQYELKVNGEPVVLHLEKNKGLFSEDYSETHYSPDGREITTYPLVEDHCYYHGRIENDADSTASISTCNGLKGHFKLQGEMYLIEPLELSDSEAHAVYKYENVEKEDEAPKMCGVTQNWESYEPTKKAFQLNLTPEQQGFPQRYVELVIIADHRMYMKYKRDSNKITQWVHQMVNTINEIYRPLNIQFALVGLEIWSNQDLITVTSVSDDTLISFANWRETVLLRRKSHDNAQLLTAIVFDEGIIGRAPLAGMCDPNRSVGTVQDHSKINFRVAIIMAHEIGHNLGMGHDDNSCTCGGYSCIMLPRLSKQPSKLFSDCSKKDYLTFLKVKNPQCILNKPLRTDTVSTPVSGNELLEA</sequence>
<proteinExistence type="evidence at transcript level"/>
<name>VM1V1_AGKPL</name>
<accession>B7U492</accession>
<organism>
    <name type="scientific">Agkistrodon piscivorus leucostoma</name>
    <name type="common">Western cottonmouth</name>
    <name type="synonym">Acontias leucostoma</name>
    <dbReference type="NCBI Taxonomy" id="459671"/>
    <lineage>
        <taxon>Eukaryota</taxon>
        <taxon>Metazoa</taxon>
        <taxon>Chordata</taxon>
        <taxon>Craniata</taxon>
        <taxon>Vertebrata</taxon>
        <taxon>Euteleostomi</taxon>
        <taxon>Lepidosauria</taxon>
        <taxon>Squamata</taxon>
        <taxon>Bifurcata</taxon>
        <taxon>Unidentata</taxon>
        <taxon>Episquamata</taxon>
        <taxon>Toxicofera</taxon>
        <taxon>Serpentes</taxon>
        <taxon>Colubroidea</taxon>
        <taxon>Viperidae</taxon>
        <taxon>Crotalinae</taxon>
        <taxon>Agkistrodon</taxon>
    </lineage>
</organism>
<reference key="1">
    <citation type="journal article" date="2009" name="Toxicon">
        <title>cDNA cloning, expression and fibrin(ogen)olytic activity of two low-molecular weight snake venom metalloproteinases.</title>
        <authorList>
            <person name="Jia Y."/>
            <person name="Lucena S."/>
            <person name="Cantu E. Jr."/>
            <person name="Sanchez E.E."/>
            <person name="Perez J.C."/>
        </authorList>
    </citation>
    <scope>NUCLEOTIDE SEQUENCE [MRNA]</scope>
    <scope>FUNCTION</scope>
    <scope>ACTIVITY REGULATION</scope>
    <source>
        <tissue>Venom gland</tissue>
    </source>
</reference>
<reference key="2">
    <citation type="journal article" date="2010" name="Toxicon">
        <title>Molecular cloning and characterization of cDNAs encoding metalloproteinases from snake venom glands.</title>
        <authorList>
            <person name="Jia Y."/>
            <person name="Perez J.C."/>
        </authorList>
    </citation>
    <scope>NUCLEOTIDE SEQUENCE [MRNA]</scope>
    <source>
        <tissue>Venom gland</tissue>
    </source>
</reference>
<dbReference type="EC" id="3.4.24.-"/>
<dbReference type="EMBL" id="FJ429179">
    <property type="protein sequence ID" value="ACJ61244.1"/>
    <property type="molecule type" value="mRNA"/>
</dbReference>
<dbReference type="SMR" id="B7U492"/>
<dbReference type="MEROPS" id="M12.133"/>
<dbReference type="GO" id="GO:0005576">
    <property type="term" value="C:extracellular region"/>
    <property type="evidence" value="ECO:0007669"/>
    <property type="project" value="UniProtKB-SubCell"/>
</dbReference>
<dbReference type="GO" id="GO:0005886">
    <property type="term" value="C:plasma membrane"/>
    <property type="evidence" value="ECO:0007669"/>
    <property type="project" value="TreeGrafter"/>
</dbReference>
<dbReference type="GO" id="GO:0046872">
    <property type="term" value="F:metal ion binding"/>
    <property type="evidence" value="ECO:0007669"/>
    <property type="project" value="UniProtKB-KW"/>
</dbReference>
<dbReference type="GO" id="GO:0004222">
    <property type="term" value="F:metalloendopeptidase activity"/>
    <property type="evidence" value="ECO:0007669"/>
    <property type="project" value="InterPro"/>
</dbReference>
<dbReference type="GO" id="GO:0090729">
    <property type="term" value="F:toxin activity"/>
    <property type="evidence" value="ECO:0007669"/>
    <property type="project" value="UniProtKB-KW"/>
</dbReference>
<dbReference type="GO" id="GO:0006508">
    <property type="term" value="P:proteolysis"/>
    <property type="evidence" value="ECO:0007669"/>
    <property type="project" value="UniProtKB-KW"/>
</dbReference>
<dbReference type="CDD" id="cd04269">
    <property type="entry name" value="ZnMc_adamalysin_II_like"/>
    <property type="match status" value="1"/>
</dbReference>
<dbReference type="FunFam" id="3.40.390.10:FF:000002">
    <property type="entry name" value="Disintegrin and metalloproteinase domain-containing protein 22"/>
    <property type="match status" value="1"/>
</dbReference>
<dbReference type="Gene3D" id="3.40.390.10">
    <property type="entry name" value="Collagenase (Catalytic Domain)"/>
    <property type="match status" value="1"/>
</dbReference>
<dbReference type="InterPro" id="IPR024079">
    <property type="entry name" value="MetalloPept_cat_dom_sf"/>
</dbReference>
<dbReference type="InterPro" id="IPR001590">
    <property type="entry name" value="Peptidase_M12B"/>
</dbReference>
<dbReference type="InterPro" id="IPR002870">
    <property type="entry name" value="Peptidase_M12B_N"/>
</dbReference>
<dbReference type="InterPro" id="IPR034027">
    <property type="entry name" value="Reprolysin_adamalysin"/>
</dbReference>
<dbReference type="PANTHER" id="PTHR11905">
    <property type="entry name" value="ADAM A DISINTEGRIN AND METALLOPROTEASE DOMAIN"/>
    <property type="match status" value="1"/>
</dbReference>
<dbReference type="PANTHER" id="PTHR11905:SF32">
    <property type="entry name" value="DISINTEGRIN AND METALLOPROTEINASE DOMAIN-CONTAINING PROTEIN 28"/>
    <property type="match status" value="1"/>
</dbReference>
<dbReference type="Pfam" id="PF01562">
    <property type="entry name" value="Pep_M12B_propep"/>
    <property type="match status" value="1"/>
</dbReference>
<dbReference type="Pfam" id="PF01421">
    <property type="entry name" value="Reprolysin"/>
    <property type="match status" value="1"/>
</dbReference>
<dbReference type="SUPFAM" id="SSF55486">
    <property type="entry name" value="Metalloproteases ('zincins'), catalytic domain"/>
    <property type="match status" value="1"/>
</dbReference>
<dbReference type="PROSITE" id="PS50215">
    <property type="entry name" value="ADAM_MEPRO"/>
    <property type="match status" value="1"/>
</dbReference>
<dbReference type="PROSITE" id="PS00142">
    <property type="entry name" value="ZINC_PROTEASE"/>
    <property type="match status" value="1"/>
</dbReference>
<feature type="signal peptide" evidence="2">
    <location>
        <begin position="1"/>
        <end position="20"/>
    </location>
</feature>
<feature type="propeptide" id="PRO_0000407746" evidence="1">
    <location>
        <begin position="21"/>
        <end position="189"/>
    </location>
</feature>
<feature type="chain" id="PRO_0000407747" description="Snake venom metalloproteinase VMP1">
    <location>
        <begin position="190"/>
        <end position="411"/>
    </location>
</feature>
<feature type="domain" description="Peptidase M12B" evidence="3">
    <location>
        <begin position="197"/>
        <end position="393"/>
    </location>
</feature>
<feature type="active site" evidence="3 4">
    <location>
        <position position="334"/>
    </location>
</feature>
<feature type="binding site" evidence="1">
    <location>
        <position position="200"/>
    </location>
    <ligand>
        <name>Ca(2+)</name>
        <dbReference type="ChEBI" id="CHEBI:29108"/>
        <label>1</label>
    </ligand>
</feature>
<feature type="binding site" evidence="1">
    <location>
        <position position="284"/>
    </location>
    <ligand>
        <name>Ca(2+)</name>
        <dbReference type="ChEBI" id="CHEBI:29108"/>
        <label>1</label>
    </ligand>
</feature>
<feature type="binding site" evidence="1">
    <location>
        <position position="333"/>
    </location>
    <ligand>
        <name>Zn(2+)</name>
        <dbReference type="ChEBI" id="CHEBI:29105"/>
        <note>catalytic</note>
    </ligand>
</feature>
<feature type="binding site" evidence="1">
    <location>
        <position position="337"/>
    </location>
    <ligand>
        <name>Zn(2+)</name>
        <dbReference type="ChEBI" id="CHEBI:29105"/>
        <note>catalytic</note>
    </ligand>
</feature>
<feature type="binding site" evidence="1">
    <location>
        <position position="343"/>
    </location>
    <ligand>
        <name>Zn(2+)</name>
        <dbReference type="ChEBI" id="CHEBI:29105"/>
        <note>catalytic</note>
    </ligand>
</feature>
<feature type="binding site" evidence="1">
    <location>
        <position position="388"/>
    </location>
    <ligand>
        <name>Ca(2+)</name>
        <dbReference type="ChEBI" id="CHEBI:29108"/>
        <label>1</label>
    </ligand>
</feature>
<feature type="binding site" evidence="1">
    <location>
        <position position="391"/>
    </location>
    <ligand>
        <name>Ca(2+)</name>
        <dbReference type="ChEBI" id="CHEBI:29108"/>
        <label>1</label>
    </ligand>
</feature>
<feature type="binding site" evidence="1">
    <location>
        <position position="403"/>
    </location>
    <ligand>
        <name>Ca(2+)</name>
        <dbReference type="ChEBI" id="CHEBI:29108"/>
        <label>2</label>
    </ligand>
</feature>
<feature type="binding site" evidence="1">
    <location>
        <position position="406"/>
    </location>
    <ligand>
        <name>Ca(2+)</name>
        <dbReference type="ChEBI" id="CHEBI:29108"/>
        <label>2</label>
    </ligand>
</feature>
<feature type="binding site" evidence="1">
    <location>
        <position position="408"/>
    </location>
    <ligand>
        <name>Ca(2+)</name>
        <dbReference type="ChEBI" id="CHEBI:29108"/>
        <label>2</label>
    </ligand>
</feature>
<feature type="binding site" evidence="1">
    <location>
        <position position="410"/>
    </location>
    <ligand>
        <name>Ca(2+)</name>
        <dbReference type="ChEBI" id="CHEBI:29108"/>
        <label>2</label>
    </ligand>
</feature>
<feature type="glycosylation site" description="N-linked (GlcNAc...) asparagine" evidence="2">
    <location>
        <position position="311"/>
    </location>
</feature>
<feature type="disulfide bond" evidence="3">
    <location>
        <begin position="308"/>
        <end position="388"/>
    </location>
</feature>
<feature type="disulfide bond" evidence="3">
    <location>
        <begin position="348"/>
        <end position="372"/>
    </location>
</feature>
<feature type="disulfide bond" evidence="3">
    <location>
        <begin position="350"/>
        <end position="355"/>
    </location>
</feature>
<keyword id="KW-0106">Calcium</keyword>
<keyword id="KW-1015">Disulfide bond</keyword>
<keyword id="KW-1206">Fibrinogenolytic toxin</keyword>
<keyword id="KW-1205">Fibrinolytic toxin</keyword>
<keyword id="KW-0325">Glycoprotein</keyword>
<keyword id="KW-1199">Hemostasis impairing toxin</keyword>
<keyword id="KW-0378">Hydrolase</keyword>
<keyword id="KW-0479">Metal-binding</keyword>
<keyword id="KW-0482">Metalloprotease</keyword>
<keyword id="KW-0645">Protease</keyword>
<keyword id="KW-0964">Secreted</keyword>
<keyword id="KW-0732">Signal</keyword>
<keyword id="KW-0800">Toxin</keyword>
<keyword id="KW-0862">Zinc</keyword>
<keyword id="KW-0865">Zymogen</keyword>
<evidence type="ECO:0000250" key="1"/>
<evidence type="ECO:0000255" key="2"/>
<evidence type="ECO:0000255" key="3">
    <source>
        <dbReference type="PROSITE-ProRule" id="PRU00276"/>
    </source>
</evidence>
<evidence type="ECO:0000255" key="4">
    <source>
        <dbReference type="PROSITE-ProRule" id="PRU10095"/>
    </source>
</evidence>
<evidence type="ECO:0000269" key="5">
    <source>
    </source>
</evidence>
<evidence type="ECO:0000305" key="6"/>
<protein>
    <recommendedName>
        <fullName>Snake venom metalloproteinase VMP1</fullName>
        <shortName>AplVMP-I</shortName>
        <shortName>AplVMP1</shortName>
        <shortName>SVMP</shortName>
        <ecNumber>3.4.24.-</ecNumber>
    </recommendedName>
</protein>